<comment type="function">
    <text>Cytochromes P450 are a group of heme-thiolate monooxygenases. In liver microsomes, this enzyme is involved in an NADPH-dependent electron transport pathway. It oxidizes a variety of structurally unrelated compounds, including steroids, fatty acids, and xenobiotics. In the epoxidation of arachidonic acid it generates only 14,15- and 11,12-cis-epoxyeicosatrienoic acids.</text>
</comment>
<comment type="catalytic activity">
    <reaction>
        <text>an organic molecule + reduced [NADPH--hemoprotein reductase] + O2 = an alcohol + oxidized [NADPH--hemoprotein reductase] + H2O + H(+)</text>
        <dbReference type="Rhea" id="RHEA:17149"/>
        <dbReference type="Rhea" id="RHEA-COMP:11964"/>
        <dbReference type="Rhea" id="RHEA-COMP:11965"/>
        <dbReference type="ChEBI" id="CHEBI:15377"/>
        <dbReference type="ChEBI" id="CHEBI:15378"/>
        <dbReference type="ChEBI" id="CHEBI:15379"/>
        <dbReference type="ChEBI" id="CHEBI:30879"/>
        <dbReference type="ChEBI" id="CHEBI:57618"/>
        <dbReference type="ChEBI" id="CHEBI:58210"/>
        <dbReference type="ChEBI" id="CHEBI:142491"/>
        <dbReference type="EC" id="1.14.14.1"/>
    </reaction>
</comment>
<comment type="cofactor">
    <cofactor evidence="1">
        <name>heme</name>
        <dbReference type="ChEBI" id="CHEBI:30413"/>
    </cofactor>
</comment>
<comment type="interaction">
    <interactant intactId="EBI-4320576">
        <id>P00181</id>
    </interactant>
    <interactant intactId="EBI-6252425">
        <id>O15503</id>
        <label>INSIG1</label>
    </interactant>
    <organismsDiffer>true</organismsDiffer>
    <experiments>3</experiments>
</comment>
<comment type="interaction">
    <interactant intactId="EBI-4320576">
        <id>P00181</id>
    </interactant>
    <interactant intactId="EBI-1045534">
        <id>O00264</id>
        <label>PGRMC1</label>
    </interactant>
    <organismsDiffer>true</organismsDiffer>
    <experiments>6</experiments>
</comment>
<comment type="interaction">
    <interactant intactId="EBI-4320576">
        <id>P00181</id>
    </interactant>
    <interactant intactId="EBI-726554">
        <id>P16435</id>
        <label>POR</label>
    </interactant>
    <organismsDiffer>true</organismsDiffer>
    <experiments>4</experiments>
</comment>
<comment type="subcellular location">
    <subcellularLocation>
        <location>Endoplasmic reticulum membrane</location>
        <topology>Peripheral membrane protein</topology>
    </subcellularLocation>
    <subcellularLocation>
        <location>Microsome membrane</location>
        <topology>Peripheral membrane protein</topology>
    </subcellularLocation>
</comment>
<comment type="induction">
    <text>By phenobarbital.</text>
</comment>
<comment type="similarity">
    <text evidence="2">Belongs to the cytochrome P450 family.</text>
</comment>
<name>CP2C2_RABIT</name>
<sequence length="490" mass="55776">MDLVVVLGLCLSCLLLPSLWKQSHGGGKLPPGPTPFPILGNVLQLDFKDLSKSLTNLSKVYGPVFTVYLGMKPTVVVHGYEAVKEALVDLGHELSGRSRFLVTAKLNKGFGVIFSNGKRWTETRRFSLMTLRNFGMGKRSIEERVQEEAHCLVEELRKTNASPCDPTFILGAAPCNVICSVIFQNRFDYTDQDFLSLMGKFNENFKILNSPWVQFCNCFPILFDYFPGSHRKAVKNIFYVKNYITEQIKEHQKSLDINNPRDFIDCFLIKMEQEKCNQQSEFTIENLLTTVSDVFMAGTETTSTTLRYGLLLLMKHPEVIAKVQEEIERVIGRHRSPCMQDRSRMPYTDATVHEIQRYINLIPNNVPHTTICNLKFRNYLIPKGTDVLTSLSSVLHDDKEFPNPDRFDPGHFLDASGNFRKSDYFMPFSTGKRVCVGEALARMELFLFLTAILQNFTPKPLVNPNNVDENPFSSGIVRVPPLYRVSFIPV</sequence>
<proteinExistence type="evidence at protein level"/>
<keyword id="KW-0256">Endoplasmic reticulum</keyword>
<keyword id="KW-0349">Heme</keyword>
<keyword id="KW-0408">Iron</keyword>
<keyword id="KW-0472">Membrane</keyword>
<keyword id="KW-0479">Metal-binding</keyword>
<keyword id="KW-0492">Microsome</keyword>
<keyword id="KW-0503">Monooxygenase</keyword>
<keyword id="KW-0560">Oxidoreductase</keyword>
<keyword id="KW-1185">Reference proteome</keyword>
<protein>
    <recommendedName>
        <fullName>Cytochrome P450 2C2</fullName>
        <ecNumber>1.14.14.1</ecNumber>
    </recommendedName>
    <alternativeName>
        <fullName>CYPIIC2</fullName>
    </alternativeName>
    <alternativeName>
        <fullName>Cytochrome P450 PBc2</fullName>
    </alternativeName>
    <alternativeName>
        <fullName>Cytochrome P450 PHP2</fullName>
    </alternativeName>
    <alternativeName>
        <fullName>Laurate omega-1 hydroxylase</fullName>
    </alternativeName>
</protein>
<evidence type="ECO:0000250" key="1"/>
<evidence type="ECO:0000305" key="2"/>
<organism>
    <name type="scientific">Oryctolagus cuniculus</name>
    <name type="common">Rabbit</name>
    <dbReference type="NCBI Taxonomy" id="9986"/>
    <lineage>
        <taxon>Eukaryota</taxon>
        <taxon>Metazoa</taxon>
        <taxon>Chordata</taxon>
        <taxon>Craniata</taxon>
        <taxon>Vertebrata</taxon>
        <taxon>Euteleostomi</taxon>
        <taxon>Mammalia</taxon>
        <taxon>Eutheria</taxon>
        <taxon>Euarchontoglires</taxon>
        <taxon>Glires</taxon>
        <taxon>Lagomorpha</taxon>
        <taxon>Leporidae</taxon>
        <taxon>Oryctolagus</taxon>
    </lineage>
</organism>
<gene>
    <name type="primary">CYP2C2</name>
</gene>
<reference key="1">
    <citation type="journal article" date="1988" name="Biochemistry">
        <title>Comparison of primary structures deduced from cDNA nucleotide sequences for various forms of liver microsomal cytochrome P-450 from phenobarbital-treated rabbits.</title>
        <authorList>
            <person name="Imai Y."/>
            <person name="Komori M."/>
            <person name="Sato R."/>
        </authorList>
    </citation>
    <scope>NUCLEOTIDE SEQUENCE [MRNA]</scope>
    <source>
        <tissue>Liver</tissue>
    </source>
</reference>
<reference key="2">
    <citation type="journal article" date="1984" name="Biochemistry">
        <title>Isolation and sequence analysis of three cloned cDNAs for rabbit liver proteins that are related to rabbit cytochrome P-450 (form 2), the major phenobarbital-inducible form.</title>
        <authorList>
            <person name="Leighton J.K."/>
            <person name="Debrunner-Vossbrinck B.A."/>
            <person name="Kemper B."/>
        </authorList>
    </citation>
    <scope>NUCLEOTIDE SEQUENCE [MRNA] OF 12-490</scope>
</reference>
<reference key="3">
    <citation type="journal article" date="1986" name="DNA">
        <title>Structure of genes in the cytochrome P-450PBc subfamily: conservation of intron locations in the phenobarbital-inducible family.</title>
        <authorList>
            <person name="Govind S."/>
            <person name="Bell P.A."/>
        </authorList>
    </citation>
    <scope>NUCLEOTIDE SEQUENCE [GENOMIC DNA] OF 1-22</scope>
</reference>
<dbReference type="EC" id="1.14.14.1"/>
<dbReference type="EMBL" id="M19137">
    <property type="protein sequence ID" value="AAA31217.1"/>
    <property type="molecule type" value="mRNA"/>
</dbReference>
<dbReference type="EMBL" id="K01521">
    <property type="protein sequence ID" value="AAA31210.1"/>
    <property type="molecule type" value="mRNA"/>
</dbReference>
<dbReference type="EMBL" id="M14955">
    <property type="protein sequence ID" value="AAA31208.1"/>
    <property type="molecule type" value="Genomic_DNA"/>
</dbReference>
<dbReference type="PIR" id="A27718">
    <property type="entry name" value="O4RBP2"/>
</dbReference>
<dbReference type="RefSeq" id="NP_001164584.1">
    <property type="nucleotide sequence ID" value="NM_001171113.1"/>
</dbReference>
<dbReference type="SMR" id="P00181"/>
<dbReference type="BioGRID" id="1173522">
    <property type="interactions" value="4"/>
</dbReference>
<dbReference type="FunCoup" id="P00181">
    <property type="interactions" value="247"/>
</dbReference>
<dbReference type="IntAct" id="P00181">
    <property type="interactions" value="27"/>
</dbReference>
<dbReference type="STRING" id="9986.ENSOCUP00000013127"/>
<dbReference type="PaxDb" id="9986-ENSOCUP00000013127"/>
<dbReference type="GeneID" id="100328924"/>
<dbReference type="KEGG" id="ocu:100328924"/>
<dbReference type="CTD" id="100328924"/>
<dbReference type="eggNOG" id="KOG0156">
    <property type="taxonomic scope" value="Eukaryota"/>
</dbReference>
<dbReference type="InParanoid" id="P00181"/>
<dbReference type="OrthoDB" id="1103324at2759"/>
<dbReference type="Proteomes" id="UP000001811">
    <property type="component" value="Unplaced"/>
</dbReference>
<dbReference type="GO" id="GO:0005789">
    <property type="term" value="C:endoplasmic reticulum membrane"/>
    <property type="evidence" value="ECO:0007669"/>
    <property type="project" value="UniProtKB-SubCell"/>
</dbReference>
<dbReference type="GO" id="GO:0020037">
    <property type="term" value="F:heme binding"/>
    <property type="evidence" value="ECO:0007669"/>
    <property type="project" value="InterPro"/>
</dbReference>
<dbReference type="GO" id="GO:0005506">
    <property type="term" value="F:iron ion binding"/>
    <property type="evidence" value="ECO:0007669"/>
    <property type="project" value="InterPro"/>
</dbReference>
<dbReference type="GO" id="GO:0016712">
    <property type="term" value="F:oxidoreductase activity, acting on paired donors, with incorporation or reduction of molecular oxygen, reduced flavin or flavoprotein as one donor, and incorporation of one atom of oxygen"/>
    <property type="evidence" value="ECO:0007669"/>
    <property type="project" value="UniProtKB-EC"/>
</dbReference>
<dbReference type="GO" id="GO:0006082">
    <property type="term" value="P:organic acid metabolic process"/>
    <property type="evidence" value="ECO:0007669"/>
    <property type="project" value="TreeGrafter"/>
</dbReference>
<dbReference type="GO" id="GO:0006805">
    <property type="term" value="P:xenobiotic metabolic process"/>
    <property type="evidence" value="ECO:0007669"/>
    <property type="project" value="TreeGrafter"/>
</dbReference>
<dbReference type="CDD" id="cd20665">
    <property type="entry name" value="CYP2C-like"/>
    <property type="match status" value="1"/>
</dbReference>
<dbReference type="FunFam" id="1.10.630.10:FF:000299">
    <property type="entry name" value="Cytochrome P450 2C9"/>
    <property type="match status" value="1"/>
</dbReference>
<dbReference type="Gene3D" id="1.10.630.10">
    <property type="entry name" value="Cytochrome P450"/>
    <property type="match status" value="1"/>
</dbReference>
<dbReference type="InterPro" id="IPR001128">
    <property type="entry name" value="Cyt_P450"/>
</dbReference>
<dbReference type="InterPro" id="IPR017972">
    <property type="entry name" value="Cyt_P450_CS"/>
</dbReference>
<dbReference type="InterPro" id="IPR002401">
    <property type="entry name" value="Cyt_P450_E_grp-I"/>
</dbReference>
<dbReference type="InterPro" id="IPR036396">
    <property type="entry name" value="Cyt_P450_sf"/>
</dbReference>
<dbReference type="InterPro" id="IPR050182">
    <property type="entry name" value="Cytochrome_P450_fam2"/>
</dbReference>
<dbReference type="PANTHER" id="PTHR24300:SF400">
    <property type="entry name" value="CYTOCHROME P450 2C9"/>
    <property type="match status" value="1"/>
</dbReference>
<dbReference type="PANTHER" id="PTHR24300">
    <property type="entry name" value="CYTOCHROME P450 508A4-RELATED"/>
    <property type="match status" value="1"/>
</dbReference>
<dbReference type="Pfam" id="PF00067">
    <property type="entry name" value="p450"/>
    <property type="match status" value="1"/>
</dbReference>
<dbReference type="PRINTS" id="PR00463">
    <property type="entry name" value="EP450I"/>
</dbReference>
<dbReference type="PRINTS" id="PR00385">
    <property type="entry name" value="P450"/>
</dbReference>
<dbReference type="SUPFAM" id="SSF48264">
    <property type="entry name" value="Cytochrome P450"/>
    <property type="match status" value="1"/>
</dbReference>
<dbReference type="PROSITE" id="PS00086">
    <property type="entry name" value="CYTOCHROME_P450"/>
    <property type="match status" value="1"/>
</dbReference>
<accession>P00181</accession>
<accession>Q28683</accession>
<feature type="chain" id="PRO_0000051693" description="Cytochrome P450 2C2">
    <location>
        <begin position="1"/>
        <end position="490"/>
    </location>
</feature>
<feature type="binding site" description="axial binding residue">
    <location>
        <position position="435"/>
    </location>
    <ligand>
        <name>heme</name>
        <dbReference type="ChEBI" id="CHEBI:30413"/>
    </ligand>
    <ligandPart>
        <name>Fe</name>
        <dbReference type="ChEBI" id="CHEBI:18248"/>
    </ligandPart>
</feature>
<feature type="sequence conflict" description="In Ref. 2; AAA31210 and 3; AAA31208." evidence="2" ref="2 3">
    <original>P</original>
    <variation>L</variation>
    <location>
        <position position="17"/>
    </location>
</feature>
<feature type="sequence conflict" description="In Ref. 2; AAA31210." evidence="2" ref="2">
    <original>P</original>
    <variation>L</variation>
    <location>
        <position position="471"/>
    </location>
</feature>